<gene>
    <name evidence="1" type="primary">pdxA</name>
    <name type="ordered locus">CC_1686</name>
</gene>
<organism>
    <name type="scientific">Caulobacter vibrioides (strain ATCC 19089 / CIP 103742 / CB 15)</name>
    <name type="common">Caulobacter crescentus</name>
    <dbReference type="NCBI Taxonomy" id="190650"/>
    <lineage>
        <taxon>Bacteria</taxon>
        <taxon>Pseudomonadati</taxon>
        <taxon>Pseudomonadota</taxon>
        <taxon>Alphaproteobacteria</taxon>
        <taxon>Caulobacterales</taxon>
        <taxon>Caulobacteraceae</taxon>
        <taxon>Caulobacter</taxon>
    </lineage>
</organism>
<accession>Q9A7N4</accession>
<proteinExistence type="inferred from homology"/>
<protein>
    <recommendedName>
        <fullName evidence="1">4-hydroxythreonine-4-phosphate dehydrogenase</fullName>
        <ecNumber evidence="1">1.1.1.262</ecNumber>
    </recommendedName>
    <alternativeName>
        <fullName evidence="1">4-(phosphohydroxy)-L-threonine dehydrogenase</fullName>
    </alternativeName>
</protein>
<sequence>MTSRPLAISAGDPAGVGAEIIAKAWRALRQDGPTFVVIGDAQLLASAGGGVKVRAVTRPQEAAQVFPDALPVLDIPVLSPVVYGRPSPSHAPQIIRWIETGVGLALSGAVSGLVTAPIAKAPLYEAGFQFPGHTEFLAELTAAASMVGARGPVMMLAAGDLRATLVTIHTALAKAPSALTTEAIINSGLVTAQALRKDFGIAEPRLAVAALNPHAGEGGALGREEIDIIAPAVEALRALGVQASGPAPADTLFHPEARARYDGVLCMYHDQALIPVKMLDFWGGVNITLGLPIVRTSPDHGTGFDIAGRGIARPDSLIAAIQLAAKIAARRGV</sequence>
<evidence type="ECO:0000255" key="1">
    <source>
        <dbReference type="HAMAP-Rule" id="MF_00536"/>
    </source>
</evidence>
<keyword id="KW-0170">Cobalt</keyword>
<keyword id="KW-0963">Cytoplasm</keyword>
<keyword id="KW-0460">Magnesium</keyword>
<keyword id="KW-0479">Metal-binding</keyword>
<keyword id="KW-0520">NAD</keyword>
<keyword id="KW-0521">NADP</keyword>
<keyword id="KW-0560">Oxidoreductase</keyword>
<keyword id="KW-0664">Pyridoxine biosynthesis</keyword>
<keyword id="KW-1185">Reference proteome</keyword>
<keyword id="KW-0862">Zinc</keyword>
<name>PDXA_CAUVC</name>
<comment type="function">
    <text evidence="1">Catalyzes the NAD(P)-dependent oxidation of 4-(phosphooxy)-L-threonine (HTP) into 2-amino-3-oxo-4-(phosphooxy)butyric acid which spontaneously decarboxylates to form 3-amino-2-oxopropyl phosphate (AHAP).</text>
</comment>
<comment type="catalytic activity">
    <reaction evidence="1">
        <text>4-(phosphooxy)-L-threonine + NAD(+) = 3-amino-2-oxopropyl phosphate + CO2 + NADH</text>
        <dbReference type="Rhea" id="RHEA:32275"/>
        <dbReference type="ChEBI" id="CHEBI:16526"/>
        <dbReference type="ChEBI" id="CHEBI:57279"/>
        <dbReference type="ChEBI" id="CHEBI:57540"/>
        <dbReference type="ChEBI" id="CHEBI:57945"/>
        <dbReference type="ChEBI" id="CHEBI:58452"/>
        <dbReference type="EC" id="1.1.1.262"/>
    </reaction>
</comment>
<comment type="cofactor">
    <cofactor evidence="1">
        <name>Zn(2+)</name>
        <dbReference type="ChEBI" id="CHEBI:29105"/>
    </cofactor>
    <cofactor evidence="1">
        <name>Mg(2+)</name>
        <dbReference type="ChEBI" id="CHEBI:18420"/>
    </cofactor>
    <cofactor evidence="1">
        <name>Co(2+)</name>
        <dbReference type="ChEBI" id="CHEBI:48828"/>
    </cofactor>
    <text evidence="1">Binds 1 divalent metal cation per subunit. Can use ions such as Zn(2+), Mg(2+) or Co(2+).</text>
</comment>
<comment type="pathway">
    <text evidence="1">Cofactor biosynthesis; pyridoxine 5'-phosphate biosynthesis; pyridoxine 5'-phosphate from D-erythrose 4-phosphate: step 4/5.</text>
</comment>
<comment type="subunit">
    <text evidence="1">Homodimer.</text>
</comment>
<comment type="subcellular location">
    <subcellularLocation>
        <location evidence="1">Cytoplasm</location>
    </subcellularLocation>
</comment>
<comment type="miscellaneous">
    <text evidence="1">The active site is located at the dimer interface.</text>
</comment>
<comment type="similarity">
    <text evidence="1">Belongs to the PdxA family.</text>
</comment>
<reference key="1">
    <citation type="journal article" date="2001" name="Proc. Natl. Acad. Sci. U.S.A.">
        <title>Complete genome sequence of Caulobacter crescentus.</title>
        <authorList>
            <person name="Nierman W.C."/>
            <person name="Feldblyum T.V."/>
            <person name="Laub M.T."/>
            <person name="Paulsen I.T."/>
            <person name="Nelson K.E."/>
            <person name="Eisen J.A."/>
            <person name="Heidelberg J.F."/>
            <person name="Alley M.R.K."/>
            <person name="Ohta N."/>
            <person name="Maddock J.R."/>
            <person name="Potocka I."/>
            <person name="Nelson W.C."/>
            <person name="Newton A."/>
            <person name="Stephens C."/>
            <person name="Phadke N.D."/>
            <person name="Ely B."/>
            <person name="DeBoy R.T."/>
            <person name="Dodson R.J."/>
            <person name="Durkin A.S."/>
            <person name="Gwinn M.L."/>
            <person name="Haft D.H."/>
            <person name="Kolonay J.F."/>
            <person name="Smit J."/>
            <person name="Craven M.B."/>
            <person name="Khouri H.M."/>
            <person name="Shetty J."/>
            <person name="Berry K.J."/>
            <person name="Utterback T.R."/>
            <person name="Tran K."/>
            <person name="Wolf A.M."/>
            <person name="Vamathevan J.J."/>
            <person name="Ermolaeva M.D."/>
            <person name="White O."/>
            <person name="Salzberg S.L."/>
            <person name="Venter J.C."/>
            <person name="Shapiro L."/>
            <person name="Fraser C.M."/>
        </authorList>
    </citation>
    <scope>NUCLEOTIDE SEQUENCE [LARGE SCALE GENOMIC DNA]</scope>
    <source>
        <strain>ATCC 19089 / CIP 103742 / CB 15</strain>
    </source>
</reference>
<dbReference type="EC" id="1.1.1.262" evidence="1"/>
<dbReference type="EMBL" id="AE005673">
    <property type="protein sequence ID" value="AAK23664.1"/>
    <property type="molecule type" value="Genomic_DNA"/>
</dbReference>
<dbReference type="PIR" id="D87458">
    <property type="entry name" value="D87458"/>
</dbReference>
<dbReference type="RefSeq" id="NP_420496.1">
    <property type="nucleotide sequence ID" value="NC_002696.2"/>
</dbReference>
<dbReference type="RefSeq" id="WP_010919557.1">
    <property type="nucleotide sequence ID" value="NC_002696.2"/>
</dbReference>
<dbReference type="SMR" id="Q9A7N4"/>
<dbReference type="STRING" id="190650.CC_1686"/>
<dbReference type="EnsemblBacteria" id="AAK23664">
    <property type="protein sequence ID" value="AAK23664"/>
    <property type="gene ID" value="CC_1686"/>
</dbReference>
<dbReference type="KEGG" id="ccr:CC_1686"/>
<dbReference type="PATRIC" id="fig|190650.5.peg.1715"/>
<dbReference type="eggNOG" id="COG1995">
    <property type="taxonomic scope" value="Bacteria"/>
</dbReference>
<dbReference type="HOGENOM" id="CLU_040168_1_0_5"/>
<dbReference type="BioCyc" id="CAULO:CC1686-MONOMER"/>
<dbReference type="UniPathway" id="UPA00244">
    <property type="reaction ID" value="UER00312"/>
</dbReference>
<dbReference type="Proteomes" id="UP000001816">
    <property type="component" value="Chromosome"/>
</dbReference>
<dbReference type="GO" id="GO:0005737">
    <property type="term" value="C:cytoplasm"/>
    <property type="evidence" value="ECO:0007669"/>
    <property type="project" value="UniProtKB-SubCell"/>
</dbReference>
<dbReference type="GO" id="GO:0050570">
    <property type="term" value="F:4-hydroxythreonine-4-phosphate dehydrogenase activity"/>
    <property type="evidence" value="ECO:0007669"/>
    <property type="project" value="UniProtKB-UniRule"/>
</dbReference>
<dbReference type="GO" id="GO:0050897">
    <property type="term" value="F:cobalt ion binding"/>
    <property type="evidence" value="ECO:0007669"/>
    <property type="project" value="UniProtKB-UniRule"/>
</dbReference>
<dbReference type="GO" id="GO:0000287">
    <property type="term" value="F:magnesium ion binding"/>
    <property type="evidence" value="ECO:0007669"/>
    <property type="project" value="UniProtKB-UniRule"/>
</dbReference>
<dbReference type="GO" id="GO:0051287">
    <property type="term" value="F:NAD binding"/>
    <property type="evidence" value="ECO:0007669"/>
    <property type="project" value="InterPro"/>
</dbReference>
<dbReference type="GO" id="GO:0008270">
    <property type="term" value="F:zinc ion binding"/>
    <property type="evidence" value="ECO:0007669"/>
    <property type="project" value="UniProtKB-UniRule"/>
</dbReference>
<dbReference type="GO" id="GO:0042823">
    <property type="term" value="P:pyridoxal phosphate biosynthetic process"/>
    <property type="evidence" value="ECO:0007669"/>
    <property type="project" value="UniProtKB-UniRule"/>
</dbReference>
<dbReference type="GO" id="GO:0008615">
    <property type="term" value="P:pyridoxine biosynthetic process"/>
    <property type="evidence" value="ECO:0007669"/>
    <property type="project" value="UniProtKB-UniRule"/>
</dbReference>
<dbReference type="Gene3D" id="3.40.718.10">
    <property type="entry name" value="Isopropylmalate Dehydrogenase"/>
    <property type="match status" value="1"/>
</dbReference>
<dbReference type="HAMAP" id="MF_00536">
    <property type="entry name" value="PdxA"/>
    <property type="match status" value="1"/>
</dbReference>
<dbReference type="InterPro" id="IPR037510">
    <property type="entry name" value="PdxA"/>
</dbReference>
<dbReference type="InterPro" id="IPR005255">
    <property type="entry name" value="PdxA_fam"/>
</dbReference>
<dbReference type="NCBIfam" id="TIGR00557">
    <property type="entry name" value="pdxA"/>
    <property type="match status" value="1"/>
</dbReference>
<dbReference type="NCBIfam" id="NF003699">
    <property type="entry name" value="PRK05312.1"/>
    <property type="match status" value="1"/>
</dbReference>
<dbReference type="PANTHER" id="PTHR30004">
    <property type="entry name" value="4-HYDROXYTHREONINE-4-PHOSPHATE DEHYDROGENASE"/>
    <property type="match status" value="1"/>
</dbReference>
<dbReference type="PANTHER" id="PTHR30004:SF6">
    <property type="entry name" value="D-THREONATE 4-PHOSPHATE DEHYDROGENASE"/>
    <property type="match status" value="1"/>
</dbReference>
<dbReference type="Pfam" id="PF04166">
    <property type="entry name" value="PdxA"/>
    <property type="match status" value="1"/>
</dbReference>
<dbReference type="SUPFAM" id="SSF53659">
    <property type="entry name" value="Isocitrate/Isopropylmalate dehydrogenase-like"/>
    <property type="match status" value="1"/>
</dbReference>
<feature type="chain" id="PRO_0000188803" description="4-hydroxythreonine-4-phosphate dehydrogenase">
    <location>
        <begin position="1"/>
        <end position="333"/>
    </location>
</feature>
<feature type="binding site" evidence="1">
    <location>
        <position position="133"/>
    </location>
    <ligand>
        <name>substrate</name>
    </ligand>
</feature>
<feature type="binding site" evidence="1">
    <location>
        <position position="134"/>
    </location>
    <ligand>
        <name>substrate</name>
    </ligand>
</feature>
<feature type="binding site" evidence="1">
    <location>
        <position position="169"/>
    </location>
    <ligand>
        <name>a divalent metal cation</name>
        <dbReference type="ChEBI" id="CHEBI:60240"/>
        <note>ligand shared between dimeric partners</note>
    </ligand>
</feature>
<feature type="binding site" evidence="1">
    <location>
        <position position="214"/>
    </location>
    <ligand>
        <name>a divalent metal cation</name>
        <dbReference type="ChEBI" id="CHEBI:60240"/>
        <note>ligand shared between dimeric partners</note>
    </ligand>
</feature>
<feature type="binding site" evidence="1">
    <location>
        <position position="269"/>
    </location>
    <ligand>
        <name>a divalent metal cation</name>
        <dbReference type="ChEBI" id="CHEBI:60240"/>
        <note>ligand shared between dimeric partners</note>
    </ligand>
</feature>
<feature type="binding site" evidence="1">
    <location>
        <position position="277"/>
    </location>
    <ligand>
        <name>substrate</name>
    </ligand>
</feature>
<feature type="binding site" evidence="1">
    <location>
        <position position="286"/>
    </location>
    <ligand>
        <name>substrate</name>
    </ligand>
</feature>
<feature type="binding site" evidence="1">
    <location>
        <position position="295"/>
    </location>
    <ligand>
        <name>substrate</name>
    </ligand>
</feature>